<proteinExistence type="inferred from homology"/>
<gene>
    <name evidence="1" type="primary">accD</name>
    <name type="ordered locus">Aflv_0497</name>
</gene>
<evidence type="ECO:0000255" key="1">
    <source>
        <dbReference type="HAMAP-Rule" id="MF_01395"/>
    </source>
</evidence>
<evidence type="ECO:0000255" key="2">
    <source>
        <dbReference type="PROSITE-ProRule" id="PRU01136"/>
    </source>
</evidence>
<feature type="chain" id="PRO_0000389666" description="Acetyl-coenzyme A carboxylase carboxyl transferase subunit beta">
    <location>
        <begin position="1"/>
        <end position="290"/>
    </location>
</feature>
<feature type="domain" description="CoA carboxyltransferase N-terminal" evidence="2">
    <location>
        <begin position="28"/>
        <end position="290"/>
    </location>
</feature>
<feature type="zinc finger region" description="C4-type" evidence="1">
    <location>
        <begin position="32"/>
        <end position="54"/>
    </location>
</feature>
<feature type="binding site" evidence="1">
    <location>
        <position position="32"/>
    </location>
    <ligand>
        <name>Zn(2+)</name>
        <dbReference type="ChEBI" id="CHEBI:29105"/>
    </ligand>
</feature>
<feature type="binding site" evidence="1">
    <location>
        <position position="35"/>
    </location>
    <ligand>
        <name>Zn(2+)</name>
        <dbReference type="ChEBI" id="CHEBI:29105"/>
    </ligand>
</feature>
<feature type="binding site" evidence="1">
    <location>
        <position position="51"/>
    </location>
    <ligand>
        <name>Zn(2+)</name>
        <dbReference type="ChEBI" id="CHEBI:29105"/>
    </ligand>
</feature>
<feature type="binding site" evidence="1">
    <location>
        <position position="54"/>
    </location>
    <ligand>
        <name>Zn(2+)</name>
        <dbReference type="ChEBI" id="CHEBI:29105"/>
    </ligand>
</feature>
<accession>B7GGS9</accession>
<comment type="function">
    <text evidence="1">Component of the acetyl coenzyme A carboxylase (ACC) complex. Biotin carboxylase (BC) catalyzes the carboxylation of biotin on its carrier protein (BCCP) and then the CO(2) group is transferred by the transcarboxylase to acetyl-CoA to form malonyl-CoA.</text>
</comment>
<comment type="catalytic activity">
    <reaction evidence="1">
        <text>N(6)-carboxybiotinyl-L-lysyl-[protein] + acetyl-CoA = N(6)-biotinyl-L-lysyl-[protein] + malonyl-CoA</text>
        <dbReference type="Rhea" id="RHEA:54728"/>
        <dbReference type="Rhea" id="RHEA-COMP:10505"/>
        <dbReference type="Rhea" id="RHEA-COMP:10506"/>
        <dbReference type="ChEBI" id="CHEBI:57288"/>
        <dbReference type="ChEBI" id="CHEBI:57384"/>
        <dbReference type="ChEBI" id="CHEBI:83144"/>
        <dbReference type="ChEBI" id="CHEBI:83145"/>
        <dbReference type="EC" id="2.1.3.15"/>
    </reaction>
</comment>
<comment type="cofactor">
    <cofactor evidence="1">
        <name>Zn(2+)</name>
        <dbReference type="ChEBI" id="CHEBI:29105"/>
    </cofactor>
    <text evidence="1">Binds 1 zinc ion per subunit.</text>
</comment>
<comment type="pathway">
    <text evidence="1">Lipid metabolism; malonyl-CoA biosynthesis; malonyl-CoA from acetyl-CoA: step 1/1.</text>
</comment>
<comment type="subunit">
    <text evidence="1">Acetyl-CoA carboxylase is a heterohexamer composed of biotin carboxyl carrier protein (AccB), biotin carboxylase (AccC) and two subunits each of ACCase subunit alpha (AccA) and ACCase subunit beta (AccD).</text>
</comment>
<comment type="subcellular location">
    <subcellularLocation>
        <location evidence="1">Cytoplasm</location>
    </subcellularLocation>
</comment>
<comment type="similarity">
    <text evidence="1">Belongs to the AccD/PCCB family.</text>
</comment>
<organism>
    <name type="scientific">Anoxybacillus flavithermus (strain DSM 21510 / WK1)</name>
    <dbReference type="NCBI Taxonomy" id="491915"/>
    <lineage>
        <taxon>Bacteria</taxon>
        <taxon>Bacillati</taxon>
        <taxon>Bacillota</taxon>
        <taxon>Bacilli</taxon>
        <taxon>Bacillales</taxon>
        <taxon>Anoxybacillaceae</taxon>
        <taxon>Anoxybacillus</taxon>
    </lineage>
</organism>
<dbReference type="EC" id="2.1.3.15" evidence="1"/>
<dbReference type="EMBL" id="CP000922">
    <property type="protein sequence ID" value="ACJ32881.1"/>
    <property type="molecule type" value="Genomic_DNA"/>
</dbReference>
<dbReference type="RefSeq" id="WP_012574201.1">
    <property type="nucleotide sequence ID" value="NC_011567.1"/>
</dbReference>
<dbReference type="SMR" id="B7GGS9"/>
<dbReference type="STRING" id="491915.Aflv_0497"/>
<dbReference type="GeneID" id="7036754"/>
<dbReference type="KEGG" id="afl:Aflv_0497"/>
<dbReference type="PATRIC" id="fig|491915.6.peg.509"/>
<dbReference type="eggNOG" id="COG0777">
    <property type="taxonomic scope" value="Bacteria"/>
</dbReference>
<dbReference type="HOGENOM" id="CLU_015486_1_1_9"/>
<dbReference type="UniPathway" id="UPA00655">
    <property type="reaction ID" value="UER00711"/>
</dbReference>
<dbReference type="Proteomes" id="UP000000742">
    <property type="component" value="Chromosome"/>
</dbReference>
<dbReference type="GO" id="GO:0009317">
    <property type="term" value="C:acetyl-CoA carboxylase complex"/>
    <property type="evidence" value="ECO:0007669"/>
    <property type="project" value="InterPro"/>
</dbReference>
<dbReference type="GO" id="GO:0003989">
    <property type="term" value="F:acetyl-CoA carboxylase activity"/>
    <property type="evidence" value="ECO:0007669"/>
    <property type="project" value="InterPro"/>
</dbReference>
<dbReference type="GO" id="GO:0005524">
    <property type="term" value="F:ATP binding"/>
    <property type="evidence" value="ECO:0007669"/>
    <property type="project" value="UniProtKB-KW"/>
</dbReference>
<dbReference type="GO" id="GO:0016743">
    <property type="term" value="F:carboxyl- or carbamoyltransferase activity"/>
    <property type="evidence" value="ECO:0007669"/>
    <property type="project" value="UniProtKB-UniRule"/>
</dbReference>
<dbReference type="GO" id="GO:0008270">
    <property type="term" value="F:zinc ion binding"/>
    <property type="evidence" value="ECO:0007669"/>
    <property type="project" value="UniProtKB-UniRule"/>
</dbReference>
<dbReference type="GO" id="GO:0006633">
    <property type="term" value="P:fatty acid biosynthetic process"/>
    <property type="evidence" value="ECO:0007669"/>
    <property type="project" value="UniProtKB-KW"/>
</dbReference>
<dbReference type="GO" id="GO:2001295">
    <property type="term" value="P:malonyl-CoA biosynthetic process"/>
    <property type="evidence" value="ECO:0007669"/>
    <property type="project" value="UniProtKB-UniRule"/>
</dbReference>
<dbReference type="Gene3D" id="3.90.226.10">
    <property type="entry name" value="2-enoyl-CoA Hydratase, Chain A, domain 1"/>
    <property type="match status" value="1"/>
</dbReference>
<dbReference type="HAMAP" id="MF_01395">
    <property type="entry name" value="AcetylCoA_CT_beta"/>
    <property type="match status" value="1"/>
</dbReference>
<dbReference type="InterPro" id="IPR034733">
    <property type="entry name" value="AcCoA_carboxyl_beta"/>
</dbReference>
<dbReference type="InterPro" id="IPR000438">
    <property type="entry name" value="Acetyl_CoA_COase_Trfase_b_su"/>
</dbReference>
<dbReference type="InterPro" id="IPR029045">
    <property type="entry name" value="ClpP/crotonase-like_dom_sf"/>
</dbReference>
<dbReference type="InterPro" id="IPR011762">
    <property type="entry name" value="COA_CT_N"/>
</dbReference>
<dbReference type="InterPro" id="IPR041010">
    <property type="entry name" value="Znf-ACC"/>
</dbReference>
<dbReference type="NCBIfam" id="TIGR00515">
    <property type="entry name" value="accD"/>
    <property type="match status" value="1"/>
</dbReference>
<dbReference type="PANTHER" id="PTHR42995">
    <property type="entry name" value="ACETYL-COENZYME A CARBOXYLASE CARBOXYL TRANSFERASE SUBUNIT BETA, CHLOROPLASTIC"/>
    <property type="match status" value="1"/>
</dbReference>
<dbReference type="PANTHER" id="PTHR42995:SF5">
    <property type="entry name" value="ACETYL-COENZYME A CARBOXYLASE CARBOXYL TRANSFERASE SUBUNIT BETA, CHLOROPLASTIC"/>
    <property type="match status" value="1"/>
</dbReference>
<dbReference type="Pfam" id="PF01039">
    <property type="entry name" value="Carboxyl_trans"/>
    <property type="match status" value="1"/>
</dbReference>
<dbReference type="Pfam" id="PF17848">
    <property type="entry name" value="Zn_ribbon_ACC"/>
    <property type="match status" value="1"/>
</dbReference>
<dbReference type="PRINTS" id="PR01070">
    <property type="entry name" value="ACCCTRFRASEB"/>
</dbReference>
<dbReference type="SUPFAM" id="SSF52096">
    <property type="entry name" value="ClpP/crotonase"/>
    <property type="match status" value="1"/>
</dbReference>
<dbReference type="PROSITE" id="PS50980">
    <property type="entry name" value="COA_CT_NTER"/>
    <property type="match status" value="1"/>
</dbReference>
<sequence>MLKDLFSKKKKYATIPSEQAKQDVPEGIMTKCPKCKKIMYTKELVKNLRVCISCGYHHPMSAPERIGCLLDEGTFQEYDRHLLSKNPLEFPQYMEKIEEDREKTKLNEAVVTGEGTINGFPVVIAVMDSRFRMGSMGSVVGEKIARAIERAMEKSVPFIIFTASGGARMQEGVLSLMQMAKTSAALKLFSEQGGLIISVMTHPTTGGVSASFASLGDYNFAEPGALIGFAGRRVIEQTVREELPDDFQTAEFLLKHGQLDAVIPRHELKDTLTNVLDIHQSRGGDEWHTN</sequence>
<keyword id="KW-0067">ATP-binding</keyword>
<keyword id="KW-0963">Cytoplasm</keyword>
<keyword id="KW-0275">Fatty acid biosynthesis</keyword>
<keyword id="KW-0276">Fatty acid metabolism</keyword>
<keyword id="KW-0444">Lipid biosynthesis</keyword>
<keyword id="KW-0443">Lipid metabolism</keyword>
<keyword id="KW-0479">Metal-binding</keyword>
<keyword id="KW-0547">Nucleotide-binding</keyword>
<keyword id="KW-0808">Transferase</keyword>
<keyword id="KW-0862">Zinc</keyword>
<keyword id="KW-0863">Zinc-finger</keyword>
<name>ACCD_ANOFW</name>
<protein>
    <recommendedName>
        <fullName evidence="1">Acetyl-coenzyme A carboxylase carboxyl transferase subunit beta</fullName>
        <shortName evidence="1">ACCase subunit beta</shortName>
        <shortName evidence="1">Acetyl-CoA carboxylase carboxyltransferase subunit beta</shortName>
        <ecNumber evidence="1">2.1.3.15</ecNumber>
    </recommendedName>
</protein>
<reference key="1">
    <citation type="journal article" date="2008" name="Genome Biol.">
        <title>Encapsulated in silica: genome, proteome and physiology of the thermophilic bacterium Anoxybacillus flavithermus WK1.</title>
        <authorList>
            <person name="Saw J.H."/>
            <person name="Mountain B.W."/>
            <person name="Feng L."/>
            <person name="Omelchenko M.V."/>
            <person name="Hou S."/>
            <person name="Saito J.A."/>
            <person name="Stott M.B."/>
            <person name="Li D."/>
            <person name="Zhao G."/>
            <person name="Wu J."/>
            <person name="Galperin M.Y."/>
            <person name="Koonin E.V."/>
            <person name="Makarova K.S."/>
            <person name="Wolf Y.I."/>
            <person name="Rigden D.J."/>
            <person name="Dunfield P.F."/>
            <person name="Wang L."/>
            <person name="Alam M."/>
        </authorList>
    </citation>
    <scope>NUCLEOTIDE SEQUENCE [LARGE SCALE GENOMIC DNA]</scope>
    <source>
        <strain>DSM 21510 / WK1</strain>
    </source>
</reference>